<gene>
    <name type="primary">moaB</name>
    <name type="ordered locus">SA2070</name>
</gene>
<reference key="1">
    <citation type="journal article" date="2001" name="Lancet">
        <title>Whole genome sequencing of meticillin-resistant Staphylococcus aureus.</title>
        <authorList>
            <person name="Kuroda M."/>
            <person name="Ohta T."/>
            <person name="Uchiyama I."/>
            <person name="Baba T."/>
            <person name="Yuzawa H."/>
            <person name="Kobayashi I."/>
            <person name="Cui L."/>
            <person name="Oguchi A."/>
            <person name="Aoki K."/>
            <person name="Nagai Y."/>
            <person name="Lian J.-Q."/>
            <person name="Ito T."/>
            <person name="Kanamori M."/>
            <person name="Matsumaru H."/>
            <person name="Maruyama A."/>
            <person name="Murakami H."/>
            <person name="Hosoyama A."/>
            <person name="Mizutani-Ui Y."/>
            <person name="Takahashi N.K."/>
            <person name="Sawano T."/>
            <person name="Inoue R."/>
            <person name="Kaito C."/>
            <person name="Sekimizu K."/>
            <person name="Hirakawa H."/>
            <person name="Kuhara S."/>
            <person name="Goto S."/>
            <person name="Yabuzaki J."/>
            <person name="Kanehisa M."/>
            <person name="Yamashita A."/>
            <person name="Oshima K."/>
            <person name="Furuya K."/>
            <person name="Yoshino C."/>
            <person name="Shiba T."/>
            <person name="Hattori M."/>
            <person name="Ogasawara N."/>
            <person name="Hayashi H."/>
            <person name="Hiramatsu K."/>
        </authorList>
    </citation>
    <scope>NUCLEOTIDE SEQUENCE [LARGE SCALE GENOMIC DNA]</scope>
    <source>
        <strain>N315</strain>
    </source>
</reference>
<reference key="2">
    <citation type="journal article" date="2005" name="J. Microbiol. Methods">
        <title>Correlation of proteomic and transcriptomic profiles of Staphylococcus aureus during the post-exponential phase of growth.</title>
        <authorList>
            <person name="Scherl A."/>
            <person name="Francois P."/>
            <person name="Bento M."/>
            <person name="Deshusses J.M."/>
            <person name="Charbonnier Y."/>
            <person name="Converset V."/>
            <person name="Huyghe A."/>
            <person name="Walter N."/>
            <person name="Hoogland C."/>
            <person name="Appel R.D."/>
            <person name="Sanchez J.-C."/>
            <person name="Zimmermann-Ivol C.G."/>
            <person name="Corthals G.L."/>
            <person name="Hochstrasser D.F."/>
            <person name="Schrenzel J."/>
        </authorList>
    </citation>
    <scope>IDENTIFICATION BY MASS SPECTROMETRY</scope>
    <source>
        <strain>N315</strain>
    </source>
</reference>
<reference key="3">
    <citation type="submission" date="2007-10" db="UniProtKB">
        <title>Shotgun proteomic analysis of total and membrane protein extracts of S. aureus strain N315.</title>
        <authorList>
            <person name="Vaezzadeh A.R."/>
            <person name="Deshusses J."/>
            <person name="Lescuyer P."/>
            <person name="Hochstrasser D.F."/>
        </authorList>
    </citation>
    <scope>IDENTIFICATION BY MASS SPECTROMETRY [LARGE SCALE ANALYSIS]</scope>
    <source>
        <strain>N315</strain>
    </source>
</reference>
<feature type="chain" id="PRO_0000170974" description="Molybdenum cofactor biosynthesis protein B">
    <location>
        <begin position="1"/>
        <end position="168"/>
    </location>
</feature>
<dbReference type="EMBL" id="BA000018">
    <property type="protein sequence ID" value="BAB43367.1"/>
    <property type="molecule type" value="Genomic_DNA"/>
</dbReference>
<dbReference type="PIR" id="F90025">
    <property type="entry name" value="F90025"/>
</dbReference>
<dbReference type="RefSeq" id="WP_000503822.1">
    <property type="nucleotide sequence ID" value="NC_002745.2"/>
</dbReference>
<dbReference type="SMR" id="P99137"/>
<dbReference type="EnsemblBacteria" id="BAB43367">
    <property type="protein sequence ID" value="BAB43367"/>
    <property type="gene ID" value="BAB43367"/>
</dbReference>
<dbReference type="KEGG" id="sau:SA2070"/>
<dbReference type="HOGENOM" id="CLU_077358_2_3_9"/>
<dbReference type="UniPathway" id="UPA00344"/>
<dbReference type="GO" id="GO:0005829">
    <property type="term" value="C:cytosol"/>
    <property type="evidence" value="ECO:0007669"/>
    <property type="project" value="TreeGrafter"/>
</dbReference>
<dbReference type="GO" id="GO:0006777">
    <property type="term" value="P:Mo-molybdopterin cofactor biosynthetic process"/>
    <property type="evidence" value="ECO:0007669"/>
    <property type="project" value="UniProtKB-KW"/>
</dbReference>
<dbReference type="CDD" id="cd00886">
    <property type="entry name" value="MogA_MoaB"/>
    <property type="match status" value="1"/>
</dbReference>
<dbReference type="FunFam" id="3.40.980.10:FF:000006">
    <property type="entry name" value="Molybdenum cofactor biosynthesis protein B"/>
    <property type="match status" value="1"/>
</dbReference>
<dbReference type="Gene3D" id="3.40.980.10">
    <property type="entry name" value="MoaB/Mog-like domain"/>
    <property type="match status" value="1"/>
</dbReference>
<dbReference type="InterPro" id="IPR012245">
    <property type="entry name" value="MoaB"/>
</dbReference>
<dbReference type="InterPro" id="IPR036425">
    <property type="entry name" value="MoaB/Mog-like_dom_sf"/>
</dbReference>
<dbReference type="InterPro" id="IPR001453">
    <property type="entry name" value="MoaB/Mog_dom"/>
</dbReference>
<dbReference type="InterPro" id="IPR008284">
    <property type="entry name" value="MoCF_biosynth_CS"/>
</dbReference>
<dbReference type="NCBIfam" id="TIGR00177">
    <property type="entry name" value="molyb_syn"/>
    <property type="match status" value="1"/>
</dbReference>
<dbReference type="PANTHER" id="PTHR43232">
    <property type="entry name" value="MOLYBDENUM COFACTOR BIOSYNTHESIS PROTEIN B"/>
    <property type="match status" value="1"/>
</dbReference>
<dbReference type="PANTHER" id="PTHR43232:SF2">
    <property type="entry name" value="MOLYBDENUM COFACTOR BIOSYNTHESIS PROTEIN B"/>
    <property type="match status" value="1"/>
</dbReference>
<dbReference type="Pfam" id="PF00994">
    <property type="entry name" value="MoCF_biosynth"/>
    <property type="match status" value="1"/>
</dbReference>
<dbReference type="PIRSF" id="PIRSF006443">
    <property type="entry name" value="MoaB"/>
    <property type="match status" value="1"/>
</dbReference>
<dbReference type="SMART" id="SM00852">
    <property type="entry name" value="MoCF_biosynth"/>
    <property type="match status" value="1"/>
</dbReference>
<dbReference type="SUPFAM" id="SSF53218">
    <property type="entry name" value="Molybdenum cofactor biosynthesis proteins"/>
    <property type="match status" value="1"/>
</dbReference>
<dbReference type="PROSITE" id="PS01078">
    <property type="entry name" value="MOCF_BIOSYNTHESIS_1"/>
    <property type="match status" value="1"/>
</dbReference>
<sequence length="168" mass="18484">MGEHQNVKLNRTVKAAVLTVSDTRDFVTDKGGQCVRQLLQADDVEVSDAHYTIVKDEKVAITTQVKKWLEEDIDVIITTGGTGIAQRDVTIEAVKPLLTKEIEGFGELFRYLSYVEDVGTRALLSRAVAGTVNNKLIFSIPGSTGAVKLALEKLIKPELNHLIHELTK</sequence>
<name>MOAB_STAAN</name>
<protein>
    <recommendedName>
        <fullName>Molybdenum cofactor biosynthesis protein B</fullName>
    </recommendedName>
</protein>
<keyword id="KW-0501">Molybdenum cofactor biosynthesis</keyword>
<evidence type="ECO:0000250" key="1"/>
<evidence type="ECO:0000305" key="2"/>
<accession>P99137</accession>
<accession>Q99RZ7</accession>
<proteinExistence type="evidence at protein level"/>
<comment type="function">
    <text evidence="1">May be involved in the biosynthesis of molybdopterin.</text>
</comment>
<comment type="pathway">
    <text>Cofactor biosynthesis; molybdopterin biosynthesis.</text>
</comment>
<comment type="similarity">
    <text evidence="2">Belongs to the MoaB/Mog family.</text>
</comment>
<organism>
    <name type="scientific">Staphylococcus aureus (strain N315)</name>
    <dbReference type="NCBI Taxonomy" id="158879"/>
    <lineage>
        <taxon>Bacteria</taxon>
        <taxon>Bacillati</taxon>
        <taxon>Bacillota</taxon>
        <taxon>Bacilli</taxon>
        <taxon>Bacillales</taxon>
        <taxon>Staphylococcaceae</taxon>
        <taxon>Staphylococcus</taxon>
    </lineage>
</organism>